<proteinExistence type="evidence at protein level"/>
<feature type="chain" id="PRO_0000081337" description="Putative transcriptional regulator">
    <location>
        <begin position="1"/>
        <end position="207"/>
    </location>
</feature>
<feature type="domain" description="Response regulatory" evidence="1">
    <location>
        <begin position="3"/>
        <end position="118"/>
    </location>
</feature>
<feature type="domain" description="HTH luxR-type" evidence="2">
    <location>
        <begin position="140"/>
        <end position="205"/>
    </location>
</feature>
<feature type="DNA-binding region" description="H-T-H motif" evidence="2">
    <location>
        <begin position="155"/>
        <end position="174"/>
    </location>
</feature>
<feature type="modified residue" description="4-aspartylphosphate" evidence="1">
    <location>
        <position position="9"/>
    </location>
</feature>
<feature type="modified residue" description="4-aspartylphosphate" evidence="1">
    <location>
        <position position="53"/>
    </location>
</feature>
<feature type="sequence conflict" description="In Ref. 1." evidence="3" ref="1">
    <original>PA</original>
    <variation>RS</variation>
    <location>
        <begin position="85"/>
        <end position="86"/>
    </location>
</feature>
<feature type="sequence conflict" description="In Ref. 1." evidence="3" ref="1">
    <original>PRC</original>
    <variation>RR</variation>
    <location>
        <begin position="90"/>
        <end position="92"/>
    </location>
</feature>
<feature type="sequence conflict" description="In Ref. 1." evidence="3" ref="1">
    <original>Y</original>
    <variation>H</variation>
    <location>
        <position position="121"/>
    </location>
</feature>
<comment type="function">
    <text>Probable transcriptional regulator.</text>
</comment>
<comment type="sequence caution" evidence="3">
    <conflict type="frameshift">
        <sequence resource="EMBL" id="M15826"/>
    </conflict>
</comment>
<reference key="1">
    <citation type="journal article" date="1986" name="Mol. Biol. Evol.">
        <title>Nucleotide sequence of the genes for tryptophan synthase in Pseudomonas aeruginosa.</title>
        <authorList>
            <person name="Hadero A."/>
            <person name="Crawford I.P."/>
        </authorList>
    </citation>
    <scope>NUCLEOTIDE SEQUENCE [GENOMIC DNA] OF 1-206</scope>
    <source>
        <strain>ATCC 15692 / DSM 22644 / CIP 104116 / JCM 14847 / LMG 12228 / 1C / PRS 101 / PAO1</strain>
    </source>
</reference>
<reference key="2">
    <citation type="journal article" date="2000" name="Nature">
        <title>Complete genome sequence of Pseudomonas aeruginosa PAO1, an opportunistic pathogen.</title>
        <authorList>
            <person name="Stover C.K."/>
            <person name="Pham X.-Q.T."/>
            <person name="Erwin A.L."/>
            <person name="Mizoguchi S.D."/>
            <person name="Warrener P."/>
            <person name="Hickey M.J."/>
            <person name="Brinkman F.S.L."/>
            <person name="Hufnagle W.O."/>
            <person name="Kowalik D.J."/>
            <person name="Lagrou M."/>
            <person name="Garber R.L."/>
            <person name="Goltry L."/>
            <person name="Tolentino E."/>
            <person name="Westbrock-Wadman S."/>
            <person name="Yuan Y."/>
            <person name="Brody L.L."/>
            <person name="Coulter S.N."/>
            <person name="Folger K.R."/>
            <person name="Kas A."/>
            <person name="Larbig K."/>
            <person name="Lim R.M."/>
            <person name="Smith K.A."/>
            <person name="Spencer D.H."/>
            <person name="Wong G.K.-S."/>
            <person name="Wu Z."/>
            <person name="Paulsen I.T."/>
            <person name="Reizer J."/>
            <person name="Saier M.H. Jr."/>
            <person name="Hancock R.E.W."/>
            <person name="Lory S."/>
            <person name="Olson M.V."/>
        </authorList>
    </citation>
    <scope>NUCLEOTIDE SEQUENCE [LARGE SCALE GENOMIC DNA]</scope>
    <source>
        <strain>ATCC 15692 / DSM 22644 / CIP 104116 / JCM 14847 / LMG 12228 / 1C / PRS 101 / PAO1</strain>
    </source>
</reference>
<reference key="3">
    <citation type="journal article" date="1990" name="Methods Enzymol.">
        <title>Finding protein similarities with nucleotide sequence databases.</title>
        <authorList>
            <person name="Henikoff S."/>
            <person name="Wallace J.C."/>
            <person name="Brown J.P."/>
        </authorList>
    </citation>
    <scope>IDENTIFICATION OF PROTEIN</scope>
    <scope>POSSIBLE DNA-BINDING REGION</scope>
</reference>
<dbReference type="EMBL" id="M15826">
    <property type="status" value="NOT_ANNOTATED_CDS"/>
    <property type="molecule type" value="Genomic_DNA"/>
</dbReference>
<dbReference type="EMBL" id="AE004091">
    <property type="protein sequence ID" value="AAG03424.1"/>
    <property type="molecule type" value="Genomic_DNA"/>
</dbReference>
<dbReference type="PIR" id="F83640">
    <property type="entry name" value="F83640"/>
</dbReference>
<dbReference type="RefSeq" id="NP_248724.1">
    <property type="nucleotide sequence ID" value="NC_002516.2"/>
</dbReference>
<dbReference type="RefSeq" id="WP_003111192.1">
    <property type="nucleotide sequence ID" value="NZ_QZGE01000012.1"/>
</dbReference>
<dbReference type="SMR" id="P24908"/>
<dbReference type="FunCoup" id="P24908">
    <property type="interactions" value="116"/>
</dbReference>
<dbReference type="STRING" id="208964.PA0034"/>
<dbReference type="PaxDb" id="208964-PA0034"/>
<dbReference type="GeneID" id="879223"/>
<dbReference type="KEGG" id="pae:PA0034"/>
<dbReference type="PATRIC" id="fig|208964.12.peg.34"/>
<dbReference type="PseudoCAP" id="PA0034"/>
<dbReference type="HOGENOM" id="CLU_000445_90_1_6"/>
<dbReference type="InParanoid" id="P24908"/>
<dbReference type="OrthoDB" id="5593303at2"/>
<dbReference type="PhylomeDB" id="P24908"/>
<dbReference type="BioCyc" id="PAER208964:G1FZ6-35-MONOMER"/>
<dbReference type="Proteomes" id="UP000002438">
    <property type="component" value="Chromosome"/>
</dbReference>
<dbReference type="GO" id="GO:0003677">
    <property type="term" value="F:DNA binding"/>
    <property type="evidence" value="ECO:0007669"/>
    <property type="project" value="UniProtKB-KW"/>
</dbReference>
<dbReference type="GO" id="GO:0000160">
    <property type="term" value="P:phosphorelay signal transduction system"/>
    <property type="evidence" value="ECO:0007669"/>
    <property type="project" value="UniProtKB-KW"/>
</dbReference>
<dbReference type="GO" id="GO:0006355">
    <property type="term" value="P:regulation of DNA-templated transcription"/>
    <property type="evidence" value="ECO:0007669"/>
    <property type="project" value="InterPro"/>
</dbReference>
<dbReference type="CDD" id="cd06170">
    <property type="entry name" value="LuxR_C_like"/>
    <property type="match status" value="1"/>
</dbReference>
<dbReference type="CDD" id="cd17535">
    <property type="entry name" value="REC_NarL-like"/>
    <property type="match status" value="1"/>
</dbReference>
<dbReference type="Gene3D" id="3.40.50.2300">
    <property type="match status" value="1"/>
</dbReference>
<dbReference type="InterPro" id="IPR011006">
    <property type="entry name" value="CheY-like_superfamily"/>
</dbReference>
<dbReference type="InterPro" id="IPR016032">
    <property type="entry name" value="Sig_transdc_resp-reg_C-effctor"/>
</dbReference>
<dbReference type="InterPro" id="IPR001789">
    <property type="entry name" value="Sig_transdc_resp-reg_receiver"/>
</dbReference>
<dbReference type="InterPro" id="IPR000792">
    <property type="entry name" value="Tscrpt_reg_LuxR_C"/>
</dbReference>
<dbReference type="InterPro" id="IPR039420">
    <property type="entry name" value="WalR-like"/>
</dbReference>
<dbReference type="PANTHER" id="PTHR43214:SF41">
    <property type="entry name" value="NITRATE_NITRITE RESPONSE REGULATOR PROTEIN NARP"/>
    <property type="match status" value="1"/>
</dbReference>
<dbReference type="PANTHER" id="PTHR43214">
    <property type="entry name" value="TWO-COMPONENT RESPONSE REGULATOR"/>
    <property type="match status" value="1"/>
</dbReference>
<dbReference type="Pfam" id="PF00196">
    <property type="entry name" value="GerE"/>
    <property type="match status" value="1"/>
</dbReference>
<dbReference type="Pfam" id="PF00072">
    <property type="entry name" value="Response_reg"/>
    <property type="match status" value="1"/>
</dbReference>
<dbReference type="PRINTS" id="PR00038">
    <property type="entry name" value="HTHLUXR"/>
</dbReference>
<dbReference type="SMART" id="SM00421">
    <property type="entry name" value="HTH_LUXR"/>
    <property type="match status" value="1"/>
</dbReference>
<dbReference type="SMART" id="SM00448">
    <property type="entry name" value="REC"/>
    <property type="match status" value="1"/>
</dbReference>
<dbReference type="SUPFAM" id="SSF46894">
    <property type="entry name" value="C-terminal effector domain of the bipartite response regulators"/>
    <property type="match status" value="1"/>
</dbReference>
<dbReference type="SUPFAM" id="SSF52172">
    <property type="entry name" value="CheY-like"/>
    <property type="match status" value="1"/>
</dbReference>
<dbReference type="PROSITE" id="PS00622">
    <property type="entry name" value="HTH_LUXR_1"/>
    <property type="match status" value="1"/>
</dbReference>
<dbReference type="PROSITE" id="PS50043">
    <property type="entry name" value="HTH_LUXR_2"/>
    <property type="match status" value="1"/>
</dbReference>
<dbReference type="PROSITE" id="PS50110">
    <property type="entry name" value="RESPONSE_REGULATORY"/>
    <property type="match status" value="1"/>
</dbReference>
<name>TRPO_PSEAE</name>
<accession>P24908</accession>
<accession>Q9I796</accession>
<organism>
    <name type="scientific">Pseudomonas aeruginosa (strain ATCC 15692 / DSM 22644 / CIP 104116 / JCM 14847 / LMG 12228 / 1C / PRS 101 / PAO1)</name>
    <dbReference type="NCBI Taxonomy" id="208964"/>
    <lineage>
        <taxon>Bacteria</taxon>
        <taxon>Pseudomonadati</taxon>
        <taxon>Pseudomonadota</taxon>
        <taxon>Gammaproteobacteria</taxon>
        <taxon>Pseudomonadales</taxon>
        <taxon>Pseudomonadaceae</taxon>
        <taxon>Pseudomonas</taxon>
    </lineage>
</organism>
<protein>
    <recommendedName>
        <fullName>Putative transcriptional regulator</fullName>
    </recommendedName>
</protein>
<sequence>MSKVLIVDDHPAIRLAVRLLFERDGFTIVGEADNGAEALQVARKKSPDLAILDIGIPKIDGLEVIARLKSLKLDTKVLVLTRQNPAQFAPRCLQAGAMGFVSKRENLSELLLAAKAVLAGYIHFPTGALRSINQQSRDNEARMLESLSDREMTVLQYLANGNTNKAIAQQLFLSEKTVSTYKSRIMLKLNAHSLAGLIDFARRHELI</sequence>
<gene>
    <name type="ordered locus">PA0034</name>
</gene>
<keyword id="KW-0238">DNA-binding</keyword>
<keyword id="KW-0597">Phosphoprotein</keyword>
<keyword id="KW-1185">Reference proteome</keyword>
<keyword id="KW-0804">Transcription</keyword>
<keyword id="KW-0805">Transcription regulation</keyword>
<keyword id="KW-0902">Two-component regulatory system</keyword>
<evidence type="ECO:0000255" key="1">
    <source>
        <dbReference type="PROSITE-ProRule" id="PRU00169"/>
    </source>
</evidence>
<evidence type="ECO:0000255" key="2">
    <source>
        <dbReference type="PROSITE-ProRule" id="PRU00411"/>
    </source>
</evidence>
<evidence type="ECO:0000305" key="3"/>